<accession>P48575</accession>
<protein>
    <recommendedName>
        <fullName evidence="1">2-isopropylmalate synthase</fullName>
        <ecNumber evidence="1">2.3.3.13</ecNumber>
    </recommendedName>
    <alternativeName>
        <fullName evidence="1">Alpha-IPM synthase</fullName>
    </alternativeName>
    <alternativeName>
        <fullName evidence="1">Alpha-isopropylmalate synthase</fullName>
    </alternativeName>
</protein>
<organism>
    <name type="scientific">Nostoc sp. (strain PCC 7120 / SAG 25.82 / UTEX 2576)</name>
    <dbReference type="NCBI Taxonomy" id="103690"/>
    <lineage>
        <taxon>Bacteria</taxon>
        <taxon>Bacillati</taxon>
        <taxon>Cyanobacteriota</taxon>
        <taxon>Cyanophyceae</taxon>
        <taxon>Nostocales</taxon>
        <taxon>Nostocaceae</taxon>
        <taxon>Nostoc</taxon>
    </lineage>
</organism>
<evidence type="ECO:0000255" key="1">
    <source>
        <dbReference type="HAMAP-Rule" id="MF_01025"/>
    </source>
</evidence>
<evidence type="ECO:0000305" key="2"/>
<sequence>MTTKPEKIIIFDTTLRDGEQCPGATLNIDEKLAIAKQLARLGVDIIEAGFAFASPGDFEAVHKIAQTVGTQSGPVICSLARARHDDIKAAAEAIKPAAKGRIHTFIATSDIHLQYKLKKTRPEVIAIAEEMVAYAKSFTDDVEFSPEDAGRSDPEFLYQVLERAIAAGATTINIPDTVGYTTPSEFGAIIKGIKENVPNIDQAIISVHGHNDLGLAVANFLEAVKNGARQLECTINGIGERAGNAALEELVMAMHVRRQYFNPFLGRHPDSEEALTNIDTKQIYKTSRLVSNLTGMLVQPNKAIVGANAFAHESGIHQDGVLKNKLTYEIMDAQLIGLTDNQIVLGKHSGRNAFRTRLKELGFELSETELNKAFVKFKEVADKKKEISDWDLEAIVNDEIQQAPDLFRVELVQVSCGSNARPTATVTLRTPDGEELTDAAIGTGPVDAVYKAINRVVNVPNQLIEFSVQSVTAGIDAIGEVTIRLRYESRVFSGHAANTDIIVASAQAYVNALNRLYASLQTQDKQTEVTA</sequence>
<reference key="1">
    <citation type="journal article" date="1997" name="J. Bacteriol.">
        <title>Identification and characterization of the nifV-nifZ-nifT gene region from the filamentous cyanobacterium Anabaena sp. strain PCC 7120.</title>
        <authorList>
            <person name="Stricker O."/>
            <person name="Masepohl B."/>
            <person name="Klipp W."/>
            <person name="Boehme H."/>
        </authorList>
    </citation>
    <scope>NUCLEOTIDE SEQUENCE [GENOMIC DNA]</scope>
</reference>
<reference key="2">
    <citation type="journal article" date="2001" name="DNA Res.">
        <title>Complete genomic sequence of the filamentous nitrogen-fixing cyanobacterium Anabaena sp. strain PCC 7120.</title>
        <authorList>
            <person name="Kaneko T."/>
            <person name="Nakamura Y."/>
            <person name="Wolk C.P."/>
            <person name="Kuritz T."/>
            <person name="Sasamoto S."/>
            <person name="Watanabe A."/>
            <person name="Iriguchi M."/>
            <person name="Ishikawa A."/>
            <person name="Kawashima K."/>
            <person name="Kimura T."/>
            <person name="Kishida Y."/>
            <person name="Kohara M."/>
            <person name="Matsumoto M."/>
            <person name="Matsuno A."/>
            <person name="Muraki A."/>
            <person name="Nakazaki N."/>
            <person name="Shimpo S."/>
            <person name="Sugimoto M."/>
            <person name="Takazawa M."/>
            <person name="Yamada M."/>
            <person name="Yasuda M."/>
            <person name="Tabata S."/>
        </authorList>
    </citation>
    <scope>NUCLEOTIDE SEQUENCE [LARGE SCALE GENOMIC DNA]</scope>
    <source>
        <strain>PCC 7120 / SAG 25.82 / UTEX 2576</strain>
    </source>
</reference>
<gene>
    <name evidence="1" type="primary">leuA</name>
    <name type="ordered locus">alr4840</name>
</gene>
<proteinExistence type="inferred from homology"/>
<feature type="chain" id="PRO_0000140327" description="2-isopropylmalate synthase">
    <location>
        <begin position="1"/>
        <end position="531"/>
    </location>
</feature>
<feature type="domain" description="Pyruvate carboxyltransferase" evidence="1">
    <location>
        <begin position="8"/>
        <end position="284"/>
    </location>
</feature>
<feature type="region of interest" description="Regulatory domain" evidence="1">
    <location>
        <begin position="408"/>
        <end position="531"/>
    </location>
</feature>
<feature type="binding site" evidence="1">
    <location>
        <position position="17"/>
    </location>
    <ligand>
        <name>Mn(2+)</name>
        <dbReference type="ChEBI" id="CHEBI:29035"/>
    </ligand>
</feature>
<feature type="binding site" evidence="1">
    <location>
        <position position="208"/>
    </location>
    <ligand>
        <name>Mn(2+)</name>
        <dbReference type="ChEBI" id="CHEBI:29035"/>
    </ligand>
</feature>
<feature type="binding site" evidence="1">
    <location>
        <position position="210"/>
    </location>
    <ligand>
        <name>Mn(2+)</name>
        <dbReference type="ChEBI" id="CHEBI:29035"/>
    </ligand>
</feature>
<feature type="binding site" evidence="1">
    <location>
        <position position="244"/>
    </location>
    <ligand>
        <name>Mn(2+)</name>
        <dbReference type="ChEBI" id="CHEBI:29035"/>
    </ligand>
</feature>
<feature type="sequence conflict" description="In Ref. 1; CAA87005." evidence="2" ref="1">
    <original>CGSNARPT</original>
    <variation>AVAMHVQP</variation>
    <location>
        <begin position="416"/>
        <end position="423"/>
    </location>
</feature>
<dbReference type="EC" id="2.3.3.13" evidence="1"/>
<dbReference type="EMBL" id="Z46907">
    <property type="protein sequence ID" value="CAA87005.1"/>
    <property type="molecule type" value="Genomic_DNA"/>
</dbReference>
<dbReference type="EMBL" id="BA000019">
    <property type="protein sequence ID" value="BAB76539.1"/>
    <property type="molecule type" value="Genomic_DNA"/>
</dbReference>
<dbReference type="PIR" id="AH2410">
    <property type="entry name" value="AH2410"/>
</dbReference>
<dbReference type="PIR" id="S52294">
    <property type="entry name" value="S52294"/>
</dbReference>
<dbReference type="RefSeq" id="WP_010998968.1">
    <property type="nucleotide sequence ID" value="NZ_RSCN01000037.1"/>
</dbReference>
<dbReference type="SMR" id="P48575"/>
<dbReference type="STRING" id="103690.gene:10496894"/>
<dbReference type="KEGG" id="ana:alr4840"/>
<dbReference type="eggNOG" id="COG0119">
    <property type="taxonomic scope" value="Bacteria"/>
</dbReference>
<dbReference type="OrthoDB" id="570404at2"/>
<dbReference type="UniPathway" id="UPA00048">
    <property type="reaction ID" value="UER00070"/>
</dbReference>
<dbReference type="Proteomes" id="UP000002483">
    <property type="component" value="Chromosome"/>
</dbReference>
<dbReference type="GO" id="GO:0005737">
    <property type="term" value="C:cytoplasm"/>
    <property type="evidence" value="ECO:0007669"/>
    <property type="project" value="UniProtKB-SubCell"/>
</dbReference>
<dbReference type="GO" id="GO:0003852">
    <property type="term" value="F:2-isopropylmalate synthase activity"/>
    <property type="evidence" value="ECO:0007669"/>
    <property type="project" value="UniProtKB-UniRule"/>
</dbReference>
<dbReference type="GO" id="GO:0003985">
    <property type="term" value="F:acetyl-CoA C-acetyltransferase activity"/>
    <property type="evidence" value="ECO:0007669"/>
    <property type="project" value="UniProtKB-UniRule"/>
</dbReference>
<dbReference type="GO" id="GO:0030145">
    <property type="term" value="F:manganese ion binding"/>
    <property type="evidence" value="ECO:0007669"/>
    <property type="project" value="UniProtKB-UniRule"/>
</dbReference>
<dbReference type="GO" id="GO:0009098">
    <property type="term" value="P:L-leucine biosynthetic process"/>
    <property type="evidence" value="ECO:0007669"/>
    <property type="project" value="UniProtKB-UniRule"/>
</dbReference>
<dbReference type="CDD" id="cd07940">
    <property type="entry name" value="DRE_TIM_IPMS"/>
    <property type="match status" value="1"/>
</dbReference>
<dbReference type="FunFam" id="1.10.238.260:FF:000001">
    <property type="entry name" value="2-isopropylmalate synthase"/>
    <property type="match status" value="1"/>
</dbReference>
<dbReference type="FunFam" id="3.20.20.70:FF:000010">
    <property type="entry name" value="2-isopropylmalate synthase"/>
    <property type="match status" value="1"/>
</dbReference>
<dbReference type="FunFam" id="3.30.160.270:FF:000001">
    <property type="entry name" value="2-isopropylmalate synthase"/>
    <property type="match status" value="1"/>
</dbReference>
<dbReference type="Gene3D" id="1.10.238.260">
    <property type="match status" value="1"/>
</dbReference>
<dbReference type="Gene3D" id="3.30.160.270">
    <property type="match status" value="1"/>
</dbReference>
<dbReference type="Gene3D" id="3.20.20.70">
    <property type="entry name" value="Aldolase class I"/>
    <property type="match status" value="1"/>
</dbReference>
<dbReference type="HAMAP" id="MF_01025">
    <property type="entry name" value="LeuA_type1"/>
    <property type="match status" value="1"/>
</dbReference>
<dbReference type="InterPro" id="IPR050073">
    <property type="entry name" value="2-IPM_HCS-like"/>
</dbReference>
<dbReference type="InterPro" id="IPR013709">
    <property type="entry name" value="2-isopropylmalate_synth_dimer"/>
</dbReference>
<dbReference type="InterPro" id="IPR002034">
    <property type="entry name" value="AIPM/Hcit_synth_CS"/>
</dbReference>
<dbReference type="InterPro" id="IPR013785">
    <property type="entry name" value="Aldolase_TIM"/>
</dbReference>
<dbReference type="InterPro" id="IPR054691">
    <property type="entry name" value="LeuA/HCS_post-cat"/>
</dbReference>
<dbReference type="InterPro" id="IPR036230">
    <property type="entry name" value="LeuA_allosteric_dom_sf"/>
</dbReference>
<dbReference type="InterPro" id="IPR005671">
    <property type="entry name" value="LeuA_bact_synth"/>
</dbReference>
<dbReference type="InterPro" id="IPR000891">
    <property type="entry name" value="PYR_CT"/>
</dbReference>
<dbReference type="NCBIfam" id="TIGR00973">
    <property type="entry name" value="leuA_bact"/>
    <property type="match status" value="1"/>
</dbReference>
<dbReference type="NCBIfam" id="NF002086">
    <property type="entry name" value="PRK00915.1-3"/>
    <property type="match status" value="1"/>
</dbReference>
<dbReference type="PANTHER" id="PTHR10277:SF9">
    <property type="entry name" value="2-ISOPROPYLMALATE SYNTHASE 1, CHLOROPLASTIC-RELATED"/>
    <property type="match status" value="1"/>
</dbReference>
<dbReference type="PANTHER" id="PTHR10277">
    <property type="entry name" value="HOMOCITRATE SYNTHASE-RELATED"/>
    <property type="match status" value="1"/>
</dbReference>
<dbReference type="Pfam" id="PF22617">
    <property type="entry name" value="HCS_D2"/>
    <property type="match status" value="1"/>
</dbReference>
<dbReference type="Pfam" id="PF00682">
    <property type="entry name" value="HMGL-like"/>
    <property type="match status" value="1"/>
</dbReference>
<dbReference type="Pfam" id="PF08502">
    <property type="entry name" value="LeuA_dimer"/>
    <property type="match status" value="1"/>
</dbReference>
<dbReference type="SMART" id="SM00917">
    <property type="entry name" value="LeuA_dimer"/>
    <property type="match status" value="1"/>
</dbReference>
<dbReference type="SUPFAM" id="SSF110921">
    <property type="entry name" value="2-isopropylmalate synthase LeuA, allosteric (dimerisation) domain"/>
    <property type="match status" value="1"/>
</dbReference>
<dbReference type="SUPFAM" id="SSF51569">
    <property type="entry name" value="Aldolase"/>
    <property type="match status" value="1"/>
</dbReference>
<dbReference type="PROSITE" id="PS00815">
    <property type="entry name" value="AIPM_HOMOCIT_SYNTH_1"/>
    <property type="match status" value="1"/>
</dbReference>
<dbReference type="PROSITE" id="PS00816">
    <property type="entry name" value="AIPM_HOMOCIT_SYNTH_2"/>
    <property type="match status" value="1"/>
</dbReference>
<dbReference type="PROSITE" id="PS50991">
    <property type="entry name" value="PYR_CT"/>
    <property type="match status" value="1"/>
</dbReference>
<keyword id="KW-0028">Amino-acid biosynthesis</keyword>
<keyword id="KW-0100">Branched-chain amino acid biosynthesis</keyword>
<keyword id="KW-0963">Cytoplasm</keyword>
<keyword id="KW-0432">Leucine biosynthesis</keyword>
<keyword id="KW-0464">Manganese</keyword>
<keyword id="KW-0479">Metal-binding</keyword>
<keyword id="KW-1185">Reference proteome</keyword>
<keyword id="KW-0808">Transferase</keyword>
<comment type="function">
    <text evidence="1">Catalyzes the condensation of the acetyl group of acetyl-CoA with 3-methyl-2-oxobutanoate (2-ketoisovalerate) to form 3-carboxy-3-hydroxy-4-methylpentanoate (2-isopropylmalate).</text>
</comment>
<comment type="catalytic activity">
    <reaction evidence="1">
        <text>3-methyl-2-oxobutanoate + acetyl-CoA + H2O = (2S)-2-isopropylmalate + CoA + H(+)</text>
        <dbReference type="Rhea" id="RHEA:21524"/>
        <dbReference type="ChEBI" id="CHEBI:1178"/>
        <dbReference type="ChEBI" id="CHEBI:11851"/>
        <dbReference type="ChEBI" id="CHEBI:15377"/>
        <dbReference type="ChEBI" id="CHEBI:15378"/>
        <dbReference type="ChEBI" id="CHEBI:57287"/>
        <dbReference type="ChEBI" id="CHEBI:57288"/>
        <dbReference type="EC" id="2.3.3.13"/>
    </reaction>
</comment>
<comment type="cofactor">
    <cofactor evidence="1">
        <name>Mn(2+)</name>
        <dbReference type="ChEBI" id="CHEBI:29035"/>
    </cofactor>
</comment>
<comment type="pathway">
    <text evidence="1">Amino-acid biosynthesis; L-leucine biosynthesis; L-leucine from 3-methyl-2-oxobutanoate: step 1/4.</text>
</comment>
<comment type="subunit">
    <text evidence="1">Homodimer.</text>
</comment>
<comment type="subcellular location">
    <subcellularLocation>
        <location evidence="1">Cytoplasm</location>
    </subcellularLocation>
</comment>
<comment type="similarity">
    <text evidence="1 2">Belongs to the alpha-IPM synthase/homocitrate synthase family. LeuA type 1 subfamily.</text>
</comment>
<name>LEU1_NOSS1</name>